<reference key="1">
    <citation type="journal article" date="1999" name="Nature">
        <title>Sequence and analysis of chromosome 2 of the plant Arabidopsis thaliana.</title>
        <authorList>
            <person name="Lin X."/>
            <person name="Kaul S."/>
            <person name="Rounsley S.D."/>
            <person name="Shea T.P."/>
            <person name="Benito M.-I."/>
            <person name="Town C.D."/>
            <person name="Fujii C.Y."/>
            <person name="Mason T.M."/>
            <person name="Bowman C.L."/>
            <person name="Barnstead M.E."/>
            <person name="Feldblyum T.V."/>
            <person name="Buell C.R."/>
            <person name="Ketchum K.A."/>
            <person name="Lee J.J."/>
            <person name="Ronning C.M."/>
            <person name="Koo H.L."/>
            <person name="Moffat K.S."/>
            <person name="Cronin L.A."/>
            <person name="Shen M."/>
            <person name="Pai G."/>
            <person name="Van Aken S."/>
            <person name="Umayam L."/>
            <person name="Tallon L.J."/>
            <person name="Gill J.E."/>
            <person name="Adams M.D."/>
            <person name="Carrera A.J."/>
            <person name="Creasy T.H."/>
            <person name="Goodman H.M."/>
            <person name="Somerville C.R."/>
            <person name="Copenhaver G.P."/>
            <person name="Preuss D."/>
            <person name="Nierman W.C."/>
            <person name="White O."/>
            <person name="Eisen J.A."/>
            <person name="Salzberg S.L."/>
            <person name="Fraser C.M."/>
            <person name="Venter J.C."/>
        </authorList>
    </citation>
    <scope>NUCLEOTIDE SEQUENCE [LARGE SCALE GENOMIC DNA]</scope>
    <source>
        <strain>cv. Columbia</strain>
    </source>
</reference>
<reference key="2">
    <citation type="journal article" date="2017" name="Plant J.">
        <title>Araport11: a complete reannotation of the Arabidopsis thaliana reference genome.</title>
        <authorList>
            <person name="Cheng C.Y."/>
            <person name="Krishnakumar V."/>
            <person name="Chan A.P."/>
            <person name="Thibaud-Nissen F."/>
            <person name="Schobel S."/>
            <person name="Town C.D."/>
        </authorList>
    </citation>
    <scope>GENOME REANNOTATION</scope>
    <source>
        <strain>cv. Columbia</strain>
    </source>
</reference>
<reference key="3">
    <citation type="journal article" date="2003" name="Science">
        <title>Empirical analysis of transcriptional activity in the Arabidopsis genome.</title>
        <authorList>
            <person name="Yamada K."/>
            <person name="Lim J."/>
            <person name="Dale J.M."/>
            <person name="Chen H."/>
            <person name="Shinn P."/>
            <person name="Palm C.J."/>
            <person name="Southwick A.M."/>
            <person name="Wu H.C."/>
            <person name="Kim C.J."/>
            <person name="Nguyen M."/>
            <person name="Pham P.K."/>
            <person name="Cheuk R.F."/>
            <person name="Karlin-Newmann G."/>
            <person name="Liu S.X."/>
            <person name="Lam B."/>
            <person name="Sakano H."/>
            <person name="Wu T."/>
            <person name="Yu G."/>
            <person name="Miranda M."/>
            <person name="Quach H.L."/>
            <person name="Tripp M."/>
            <person name="Chang C.H."/>
            <person name="Lee J.M."/>
            <person name="Toriumi M.J."/>
            <person name="Chan M.M."/>
            <person name="Tang C.C."/>
            <person name="Onodera C.S."/>
            <person name="Deng J.M."/>
            <person name="Akiyama K."/>
            <person name="Ansari Y."/>
            <person name="Arakawa T."/>
            <person name="Banh J."/>
            <person name="Banno F."/>
            <person name="Bowser L."/>
            <person name="Brooks S.Y."/>
            <person name="Carninci P."/>
            <person name="Chao Q."/>
            <person name="Choy N."/>
            <person name="Enju A."/>
            <person name="Goldsmith A.D."/>
            <person name="Gurjal M."/>
            <person name="Hansen N.F."/>
            <person name="Hayashizaki Y."/>
            <person name="Johnson-Hopson C."/>
            <person name="Hsuan V.W."/>
            <person name="Iida K."/>
            <person name="Karnes M."/>
            <person name="Khan S."/>
            <person name="Koesema E."/>
            <person name="Ishida J."/>
            <person name="Jiang P.X."/>
            <person name="Jones T."/>
            <person name="Kawai J."/>
            <person name="Kamiya A."/>
            <person name="Meyers C."/>
            <person name="Nakajima M."/>
            <person name="Narusaka M."/>
            <person name="Seki M."/>
            <person name="Sakurai T."/>
            <person name="Satou M."/>
            <person name="Tamse R."/>
            <person name="Vaysberg M."/>
            <person name="Wallender E.K."/>
            <person name="Wong C."/>
            <person name="Yamamura Y."/>
            <person name="Yuan S."/>
            <person name="Shinozaki K."/>
            <person name="Davis R.W."/>
            <person name="Theologis A."/>
            <person name="Ecker J.R."/>
        </authorList>
    </citation>
    <scope>NUCLEOTIDE SEQUENCE [LARGE SCALE MRNA]</scope>
    <source>
        <strain>cv. Columbia</strain>
    </source>
</reference>
<reference key="4">
    <citation type="journal article" date="2008" name="BMC Genomics">
        <title>Genome-wide and expression analysis of protein phosphatase 2C in rice and Arabidopsis.</title>
        <authorList>
            <person name="Xue T."/>
            <person name="Wang D."/>
            <person name="Zhang S."/>
            <person name="Ehlting J."/>
            <person name="Ni F."/>
            <person name="Jacab S."/>
            <person name="Zheng C."/>
            <person name="Zhong Y."/>
        </authorList>
    </citation>
    <scope>GENE FAMILY</scope>
    <scope>NOMENCLATURE</scope>
</reference>
<keyword id="KW-0067">ATP-binding</keyword>
<keyword id="KW-0378">Hydrolase</keyword>
<keyword id="KW-0418">Kinase</keyword>
<keyword id="KW-0460">Magnesium</keyword>
<keyword id="KW-0464">Manganese</keyword>
<keyword id="KW-0479">Metal-binding</keyword>
<keyword id="KW-0511">Multifunctional enzyme</keyword>
<keyword id="KW-0547">Nucleotide-binding</keyword>
<keyword id="KW-0904">Protein phosphatase</keyword>
<keyword id="KW-1185">Reference proteome</keyword>
<keyword id="KW-0723">Serine/threonine-protein kinase</keyword>
<keyword id="KW-0808">Transferase</keyword>
<organism>
    <name type="scientific">Arabidopsis thaliana</name>
    <name type="common">Mouse-ear cress</name>
    <dbReference type="NCBI Taxonomy" id="3702"/>
    <lineage>
        <taxon>Eukaryota</taxon>
        <taxon>Viridiplantae</taxon>
        <taxon>Streptophyta</taxon>
        <taxon>Embryophyta</taxon>
        <taxon>Tracheophyta</taxon>
        <taxon>Spermatophyta</taxon>
        <taxon>Magnoliopsida</taxon>
        <taxon>eudicotyledons</taxon>
        <taxon>Gunneridae</taxon>
        <taxon>Pentapetalae</taxon>
        <taxon>rosids</taxon>
        <taxon>malvids</taxon>
        <taxon>Brassicales</taxon>
        <taxon>Brassicaceae</taxon>
        <taxon>Camelineae</taxon>
        <taxon>Arabidopsis</taxon>
    </lineage>
</organism>
<dbReference type="EC" id="2.7.11.1"/>
<dbReference type="EC" id="3.1.3.16"/>
<dbReference type="EMBL" id="AC002409">
    <property type="protein sequence ID" value="AAB86446.1"/>
    <property type="status" value="ALT_SEQ"/>
    <property type="molecule type" value="Genomic_DNA"/>
</dbReference>
<dbReference type="EMBL" id="AC002409">
    <property type="protein sequence ID" value="AAB86447.1"/>
    <property type="status" value="ALT_SEQ"/>
    <property type="molecule type" value="Genomic_DNA"/>
</dbReference>
<dbReference type="EMBL" id="CP002685">
    <property type="protein sequence ID" value="AEC09891.1"/>
    <property type="molecule type" value="Genomic_DNA"/>
</dbReference>
<dbReference type="EMBL" id="AY056151">
    <property type="protein sequence ID" value="AAL07230.1"/>
    <property type="molecule type" value="mRNA"/>
</dbReference>
<dbReference type="EMBL" id="AY133729">
    <property type="protein sequence ID" value="AAM91663.1"/>
    <property type="molecule type" value="mRNA"/>
</dbReference>
<dbReference type="PIR" id="T00750">
    <property type="entry name" value="T00750"/>
</dbReference>
<dbReference type="PIR" id="T00751">
    <property type="entry name" value="T00751"/>
</dbReference>
<dbReference type="RefSeq" id="NP_850336.1">
    <property type="nucleotide sequence ID" value="NM_180005.4"/>
</dbReference>
<dbReference type="SMR" id="Q940A2"/>
<dbReference type="FunCoup" id="Q940A2">
    <property type="interactions" value="632"/>
</dbReference>
<dbReference type="STRING" id="3702.Q940A2"/>
<dbReference type="iPTMnet" id="Q940A2"/>
<dbReference type="PaxDb" id="3702-AT2G40860.1"/>
<dbReference type="EnsemblPlants" id="AT2G40860.1">
    <property type="protein sequence ID" value="AT2G40860.1"/>
    <property type="gene ID" value="AT2G40860"/>
</dbReference>
<dbReference type="GeneID" id="818684"/>
<dbReference type="Gramene" id="AT2G40860.1">
    <property type="protein sequence ID" value="AT2G40860.1"/>
    <property type="gene ID" value="AT2G40860"/>
</dbReference>
<dbReference type="KEGG" id="ath:AT2G40860"/>
<dbReference type="Araport" id="AT2G40860"/>
<dbReference type="TAIR" id="AT2G40860"/>
<dbReference type="eggNOG" id="KOG0192">
    <property type="taxonomic scope" value="Eukaryota"/>
</dbReference>
<dbReference type="eggNOG" id="KOG0698">
    <property type="taxonomic scope" value="Eukaryota"/>
</dbReference>
<dbReference type="HOGENOM" id="CLU_027681_1_0_1"/>
<dbReference type="InParanoid" id="Q940A2"/>
<dbReference type="PhylomeDB" id="Q940A2"/>
<dbReference type="PRO" id="PR:Q940A2"/>
<dbReference type="Proteomes" id="UP000006548">
    <property type="component" value="Chromosome 2"/>
</dbReference>
<dbReference type="ExpressionAtlas" id="Q940A2">
    <property type="expression patterns" value="baseline and differential"/>
</dbReference>
<dbReference type="GO" id="GO:0005524">
    <property type="term" value="F:ATP binding"/>
    <property type="evidence" value="ECO:0007669"/>
    <property type="project" value="UniProtKB-KW"/>
</dbReference>
<dbReference type="GO" id="GO:0046872">
    <property type="term" value="F:metal ion binding"/>
    <property type="evidence" value="ECO:0007669"/>
    <property type="project" value="UniProtKB-KW"/>
</dbReference>
<dbReference type="GO" id="GO:0106310">
    <property type="term" value="F:protein serine kinase activity"/>
    <property type="evidence" value="ECO:0007669"/>
    <property type="project" value="RHEA"/>
</dbReference>
<dbReference type="GO" id="GO:0004674">
    <property type="term" value="F:protein serine/threonine kinase activity"/>
    <property type="evidence" value="ECO:0007669"/>
    <property type="project" value="UniProtKB-KW"/>
</dbReference>
<dbReference type="GO" id="GO:0004722">
    <property type="term" value="F:protein serine/threonine phosphatase activity"/>
    <property type="evidence" value="ECO:0000318"/>
    <property type="project" value="GO_Central"/>
</dbReference>
<dbReference type="GO" id="GO:0019852">
    <property type="term" value="P:L-ascorbic acid metabolic process"/>
    <property type="evidence" value="ECO:0000315"/>
    <property type="project" value="TAIR"/>
</dbReference>
<dbReference type="GO" id="GO:1902531">
    <property type="term" value="P:regulation of intracellular signal transduction"/>
    <property type="evidence" value="ECO:0000318"/>
    <property type="project" value="GO_Central"/>
</dbReference>
<dbReference type="CDD" id="cd00143">
    <property type="entry name" value="PP2Cc"/>
    <property type="match status" value="1"/>
</dbReference>
<dbReference type="FunFam" id="3.60.40.10:FF:000035">
    <property type="entry name" value="Leucine rich repeat protein phosphatase 2c domain containing protein"/>
    <property type="match status" value="1"/>
</dbReference>
<dbReference type="FunFam" id="1.10.510.10:FF:000683">
    <property type="entry name" value="Protein kinase and PP2C-like domain-containing protein"/>
    <property type="match status" value="1"/>
</dbReference>
<dbReference type="Gene3D" id="3.60.40.10">
    <property type="entry name" value="PPM-type phosphatase domain"/>
    <property type="match status" value="1"/>
</dbReference>
<dbReference type="Gene3D" id="1.10.510.10">
    <property type="entry name" value="Transferase(Phosphotransferase) domain 1"/>
    <property type="match status" value="1"/>
</dbReference>
<dbReference type="InterPro" id="IPR011009">
    <property type="entry name" value="Kinase-like_dom_sf"/>
</dbReference>
<dbReference type="InterPro" id="IPR036457">
    <property type="entry name" value="PPM-type-like_dom_sf"/>
</dbReference>
<dbReference type="InterPro" id="IPR001932">
    <property type="entry name" value="PPM-type_phosphatase-like_dom"/>
</dbReference>
<dbReference type="InterPro" id="IPR000719">
    <property type="entry name" value="Prot_kinase_dom"/>
</dbReference>
<dbReference type="InterPro" id="IPR008271">
    <property type="entry name" value="Ser/Thr_kinase_AS"/>
</dbReference>
<dbReference type="InterPro" id="IPR051681">
    <property type="entry name" value="Ser/Thr_Kinases-Pseudokinases"/>
</dbReference>
<dbReference type="PANTHER" id="PTHR44329:SF288">
    <property type="entry name" value="MITOGEN-ACTIVATED PROTEIN KINASE KINASE KINASE 20"/>
    <property type="match status" value="1"/>
</dbReference>
<dbReference type="PANTHER" id="PTHR44329">
    <property type="entry name" value="SERINE/THREONINE-PROTEIN KINASE TNNI3K-RELATED"/>
    <property type="match status" value="1"/>
</dbReference>
<dbReference type="Pfam" id="PF00069">
    <property type="entry name" value="Pkinase"/>
    <property type="match status" value="1"/>
</dbReference>
<dbReference type="Pfam" id="PF00481">
    <property type="entry name" value="PP2C"/>
    <property type="match status" value="1"/>
</dbReference>
<dbReference type="SMART" id="SM00331">
    <property type="entry name" value="PP2C_SIG"/>
    <property type="match status" value="1"/>
</dbReference>
<dbReference type="SMART" id="SM00332">
    <property type="entry name" value="PP2Cc"/>
    <property type="match status" value="1"/>
</dbReference>
<dbReference type="SMART" id="SM00220">
    <property type="entry name" value="S_TKc"/>
    <property type="match status" value="1"/>
</dbReference>
<dbReference type="SUPFAM" id="SSF81606">
    <property type="entry name" value="PP2C-like"/>
    <property type="match status" value="1"/>
</dbReference>
<dbReference type="SUPFAM" id="SSF56112">
    <property type="entry name" value="Protein kinase-like (PK-like)"/>
    <property type="match status" value="1"/>
</dbReference>
<dbReference type="PROSITE" id="PS51746">
    <property type="entry name" value="PPM_2"/>
    <property type="match status" value="1"/>
</dbReference>
<dbReference type="PROSITE" id="PS50011">
    <property type="entry name" value="PROTEIN_KINASE_DOM"/>
    <property type="match status" value="1"/>
</dbReference>
<dbReference type="PROSITE" id="PS00108">
    <property type="entry name" value="PROTEIN_KINASE_ST"/>
    <property type="match status" value="1"/>
</dbReference>
<gene>
    <name type="ordered locus">At2g40860/At2g40870</name>
    <name type="ORF">T20B5.6</name>
</gene>
<sequence>MVMEIVKPNTCIRGCCTSESIPLHLPSSSFTLLSPIAKGSESVVYEAILDGRRVAAKKPILSTSDDLDKFHRNLQLSCNLNHPGVAKLLAAHAKPPNYMFFFDFYESGTLAEKLHVEEWSPSIDQVLLITLHLAKALQYLHNNGIVHRDVKPANVLLDEKFFPYLADFGLAEYKKNLREVNLQNWRSSGKPTGGFHKKNMVGTLIYMAPEILRKDMYTEKADIYSFGILINELLTGVVPYTDRRAEAQAHTVLEMNYTEQQLTVAIVSSGLRPALAEIGLHLPKSLLSLIQNCWESDPSKRPSSDNVVLELESIWEQVRGKQQGHLLEKTSNSQSDTDGADIIKNSGDYRDTVNWFSQGECLSKKSSVSTVFDVKLWSSSTDEPSRYVPVISCGSFATCGRRESMEDTHFIIPHMCNEESIHLFAIFDGHRGAAAAEFSAQVLPGLVQSLCSTSAGEALSQAFVRTDLAFRQELDSHRQSKRVSQKDWHPGCTAIASLLVENKLFVANVGDSRAILCRAGHPFALSKAHLATCIDERNRVIGEGGRIEWLVDTWRVAPAGLQVTRSIGDDDLKPAVTAEPEISETILSADDEFLVMASDGLWDVMNDEEVIGIIRDTVKEPSMCSKRLATEAAARGSGDNITVIVVFLRPVSTAERIY</sequence>
<proteinExistence type="evidence at transcript level"/>
<accession>Q940A2</accession>
<accession>O22200</accession>
<accession>O22201</accession>
<feature type="chain" id="PRO_0000367959" description="Protein kinase and PP2C-like domain-containing protein">
    <location>
        <begin position="1"/>
        <end position="658"/>
    </location>
</feature>
<feature type="domain" description="Protein kinase" evidence="2">
    <location>
        <begin position="30"/>
        <end position="314"/>
    </location>
</feature>
<feature type="domain" description="PPM-type phosphatase" evidence="3">
    <location>
        <begin position="392"/>
        <end position="648"/>
    </location>
</feature>
<feature type="active site" description="Proton acceptor" evidence="2 4">
    <location>
        <position position="149"/>
    </location>
</feature>
<feature type="binding site" evidence="2">
    <location>
        <begin position="36"/>
        <end position="44"/>
    </location>
    <ligand>
        <name>ATP</name>
        <dbReference type="ChEBI" id="CHEBI:30616"/>
    </ligand>
</feature>
<feature type="binding site" evidence="2">
    <location>
        <position position="57"/>
    </location>
    <ligand>
        <name>ATP</name>
        <dbReference type="ChEBI" id="CHEBI:30616"/>
    </ligand>
</feature>
<feature type="binding site" evidence="1">
    <location>
        <position position="428"/>
    </location>
    <ligand>
        <name>Mn(2+)</name>
        <dbReference type="ChEBI" id="CHEBI:29035"/>
        <label>1</label>
    </ligand>
</feature>
<feature type="binding site" evidence="1">
    <location>
        <position position="428"/>
    </location>
    <ligand>
        <name>Mn(2+)</name>
        <dbReference type="ChEBI" id="CHEBI:29035"/>
        <label>2</label>
    </ligand>
</feature>
<feature type="binding site" evidence="1">
    <location>
        <position position="429"/>
    </location>
    <ligand>
        <name>Mn(2+)</name>
        <dbReference type="ChEBI" id="CHEBI:29035"/>
        <label>1</label>
    </ligand>
</feature>
<feature type="binding site" evidence="1">
    <location>
        <position position="599"/>
    </location>
    <ligand>
        <name>Mn(2+)</name>
        <dbReference type="ChEBI" id="CHEBI:29035"/>
        <label>2</label>
    </ligand>
</feature>
<feature type="binding site" evidence="1">
    <location>
        <position position="639"/>
    </location>
    <ligand>
        <name>Mn(2+)</name>
        <dbReference type="ChEBI" id="CHEBI:29035"/>
        <label>2</label>
    </ligand>
</feature>
<protein>
    <recommendedName>
        <fullName>Protein kinase and PP2C-like domain-containing protein</fullName>
    </recommendedName>
    <domain>
        <recommendedName>
            <fullName>Probable serine/threonine protein kinase At2g40860</fullName>
            <ecNumber>2.7.11.1</ecNumber>
        </recommendedName>
    </domain>
    <domain>
        <recommendedName>
            <fullName>Probable protein phosphatase 2C 31</fullName>
            <shortName>AtPP2C31</shortName>
            <ecNumber>3.1.3.16</ecNumber>
        </recommendedName>
    </domain>
</protein>
<comment type="catalytic activity">
    <reaction>
        <text>L-seryl-[protein] + ATP = O-phospho-L-seryl-[protein] + ADP + H(+)</text>
        <dbReference type="Rhea" id="RHEA:17989"/>
        <dbReference type="Rhea" id="RHEA-COMP:9863"/>
        <dbReference type="Rhea" id="RHEA-COMP:11604"/>
        <dbReference type="ChEBI" id="CHEBI:15378"/>
        <dbReference type="ChEBI" id="CHEBI:29999"/>
        <dbReference type="ChEBI" id="CHEBI:30616"/>
        <dbReference type="ChEBI" id="CHEBI:83421"/>
        <dbReference type="ChEBI" id="CHEBI:456216"/>
        <dbReference type="EC" id="2.7.11.1"/>
    </reaction>
</comment>
<comment type="catalytic activity">
    <reaction>
        <text>L-threonyl-[protein] + ATP = O-phospho-L-threonyl-[protein] + ADP + H(+)</text>
        <dbReference type="Rhea" id="RHEA:46608"/>
        <dbReference type="Rhea" id="RHEA-COMP:11060"/>
        <dbReference type="Rhea" id="RHEA-COMP:11605"/>
        <dbReference type="ChEBI" id="CHEBI:15378"/>
        <dbReference type="ChEBI" id="CHEBI:30013"/>
        <dbReference type="ChEBI" id="CHEBI:30616"/>
        <dbReference type="ChEBI" id="CHEBI:61977"/>
        <dbReference type="ChEBI" id="CHEBI:456216"/>
        <dbReference type="EC" id="2.7.11.1"/>
    </reaction>
</comment>
<comment type="catalytic activity">
    <reaction>
        <text>O-phospho-L-seryl-[protein] + H2O = L-seryl-[protein] + phosphate</text>
        <dbReference type="Rhea" id="RHEA:20629"/>
        <dbReference type="Rhea" id="RHEA-COMP:9863"/>
        <dbReference type="Rhea" id="RHEA-COMP:11604"/>
        <dbReference type="ChEBI" id="CHEBI:15377"/>
        <dbReference type="ChEBI" id="CHEBI:29999"/>
        <dbReference type="ChEBI" id="CHEBI:43474"/>
        <dbReference type="ChEBI" id="CHEBI:83421"/>
        <dbReference type="EC" id="3.1.3.16"/>
    </reaction>
</comment>
<comment type="catalytic activity">
    <reaction>
        <text>O-phospho-L-threonyl-[protein] + H2O = L-threonyl-[protein] + phosphate</text>
        <dbReference type="Rhea" id="RHEA:47004"/>
        <dbReference type="Rhea" id="RHEA-COMP:11060"/>
        <dbReference type="Rhea" id="RHEA-COMP:11605"/>
        <dbReference type="ChEBI" id="CHEBI:15377"/>
        <dbReference type="ChEBI" id="CHEBI:30013"/>
        <dbReference type="ChEBI" id="CHEBI:43474"/>
        <dbReference type="ChEBI" id="CHEBI:61977"/>
        <dbReference type="EC" id="3.1.3.16"/>
    </reaction>
</comment>
<comment type="cofactor">
    <cofactor evidence="1">
        <name>Mg(2+)</name>
        <dbReference type="ChEBI" id="CHEBI:18420"/>
    </cofactor>
    <cofactor evidence="1">
        <name>Mn(2+)</name>
        <dbReference type="ChEBI" id="CHEBI:29035"/>
    </cofactor>
    <text evidence="1">Binds 2 magnesium or manganese ions per subunit.</text>
</comment>
<comment type="similarity">
    <text evidence="5">In the N-terminal section; belongs to the protein kinase superfamily. Ser/Thr protein kinase family.</text>
</comment>
<comment type="similarity">
    <text evidence="5">In the C-terminal section; belongs to the PP2C family.</text>
</comment>
<comment type="sequence caution" evidence="5">
    <conflict type="erroneous gene model prediction">
        <sequence resource="EMBL-CDS" id="AAB86446"/>
    </conflict>
    <text>Was originally thought to correspond to two different genes At2g40860 and At2g40870.</text>
</comment>
<comment type="sequence caution" evidence="5">
    <conflict type="erroneous gene model prediction">
        <sequence resource="EMBL-CDS" id="AAB86447"/>
    </conflict>
    <text>Was originally thought to correspond to two different genes At2g40860 and At2g40870.</text>
</comment>
<name>P2C31_ARATH</name>
<evidence type="ECO:0000250" key="1"/>
<evidence type="ECO:0000255" key="2">
    <source>
        <dbReference type="PROSITE-ProRule" id="PRU00159"/>
    </source>
</evidence>
<evidence type="ECO:0000255" key="3">
    <source>
        <dbReference type="PROSITE-ProRule" id="PRU01082"/>
    </source>
</evidence>
<evidence type="ECO:0000255" key="4">
    <source>
        <dbReference type="PROSITE-ProRule" id="PRU10027"/>
    </source>
</evidence>
<evidence type="ECO:0000305" key="5"/>